<accession>Q9FK47</accession>
<accession>F4JWK0</accession>
<accession>Q84WH5</accession>
<accession>Q94B34</accession>
<accession>Q9C5Y6</accession>
<proteinExistence type="evidence at protein level"/>
<evidence type="ECO:0000255" key="1"/>
<evidence type="ECO:0000255" key="2">
    <source>
        <dbReference type="PROSITE-ProRule" id="PRU00625"/>
    </source>
</evidence>
<evidence type="ECO:0000256" key="3">
    <source>
        <dbReference type="SAM" id="MobiDB-lite"/>
    </source>
</evidence>
<evidence type="ECO:0000269" key="4">
    <source>
    </source>
</evidence>
<evidence type="ECO:0000269" key="5">
    <source>
    </source>
</evidence>
<evidence type="ECO:0000269" key="6">
    <source>
    </source>
</evidence>
<evidence type="ECO:0000303" key="7">
    <source>
    </source>
</evidence>
<evidence type="ECO:0000305" key="8"/>
<evidence type="ECO:0000305" key="9">
    <source>
    </source>
</evidence>
<evidence type="ECO:0000312" key="10">
    <source>
        <dbReference type="Araport" id="AT5G18240"/>
    </source>
</evidence>
<evidence type="ECO:0000312" key="11">
    <source>
        <dbReference type="EMBL" id="BAB09482.1"/>
    </source>
</evidence>
<protein>
    <recommendedName>
        <fullName evidence="7">Myb-related protein 1</fullName>
    </recommendedName>
    <alternativeName>
        <fullName evidence="8">Myb family transcription factor PHL10</fullName>
    </alternativeName>
    <alternativeName>
        <fullName evidence="8">Protein PHR1-LIKE 10</fullName>
    </alternativeName>
</protein>
<feature type="chain" id="PRO_0000436867" description="Myb-related protein 1">
    <location>
        <begin position="1"/>
        <end position="402"/>
    </location>
</feature>
<feature type="domain" description="HTH myb-type" evidence="2">
    <location>
        <begin position="42"/>
        <end position="102"/>
    </location>
</feature>
<feature type="DNA-binding region" description="H-T-H motif" evidence="2">
    <location>
        <begin position="73"/>
        <end position="98"/>
    </location>
</feature>
<feature type="region of interest" description="Disordered" evidence="3">
    <location>
        <begin position="238"/>
        <end position="266"/>
    </location>
</feature>
<feature type="region of interest" description="Disordered" evidence="3">
    <location>
        <begin position="344"/>
        <end position="363"/>
    </location>
</feature>
<feature type="region of interest" description="Disordered" evidence="3">
    <location>
        <begin position="382"/>
        <end position="402"/>
    </location>
</feature>
<feature type="coiled-coil region" evidence="1">
    <location>
        <begin position="148"/>
        <end position="168"/>
    </location>
</feature>
<feature type="short sequence motif" description="LHEQLE" evidence="8">
    <location>
        <begin position="161"/>
        <end position="166"/>
    </location>
</feature>
<feature type="compositionally biased region" description="Polar residues" evidence="3">
    <location>
        <begin position="238"/>
        <end position="260"/>
    </location>
</feature>
<feature type="splice variant" id="VSP_058438" description="In isoform 3.">
    <location>
        <begin position="167"/>
        <end position="172"/>
    </location>
</feature>
<feature type="splice variant" id="VSP_058439" description="In isoform 2.">
    <location>
        <begin position="167"/>
        <end position="168"/>
    </location>
</feature>
<feature type="sequence conflict" description="In Ref. 4; AAO30084/AAK68818." evidence="8" ref="4">
    <original>L</original>
    <variation>I</variation>
    <location>
        <position position="377"/>
    </location>
</feature>
<feature type="sequence conflict" description="In Ref. 4; AAK68818." evidence="8" ref="4">
    <original>T</original>
    <variation>A</variation>
    <location>
        <position position="389"/>
    </location>
</feature>
<gene>
    <name evidence="7" type="primary">MYR1</name>
    <name evidence="8" type="synonym">PHL10</name>
    <name evidence="10" type="ordered locus">At5g18240</name>
    <name evidence="11" type="ORF">MRG7.20</name>
</gene>
<comment type="function">
    <text evidence="5 9">Transcription factor that may act on the GAL1 promoter (PubMed:12008900). Acts redundantly with MYR2 as a repressor of flowering and organ elongation under decreased light intensity (PubMed:21255164). Represses gibberellic acid (GA)-dependent responses and affects levels of bioactive GA (PubMed:21255164).</text>
</comment>
<comment type="subunit">
    <text evidence="6">Isoforms 1 and 2: homodimer. Isoform 3: loss of dimerization.</text>
</comment>
<comment type="interaction">
    <interactant intactId="EBI-25523464">
        <id>Q9FK47</id>
    </interactant>
    <interactant intactId="EBI-2000137">
        <id>Q9MAI5</id>
        <label>ERF8</label>
    </interactant>
    <organismsDiffer>false</organismsDiffer>
    <experiments>3</experiments>
</comment>
<comment type="interaction">
    <interactant intactId="EBI-25523464">
        <id>Q9FK47</id>
    </interactant>
    <interactant intactId="EBI-632243">
        <id>P93830</id>
        <label>IAA17</label>
    </interactant>
    <organismsDiffer>false</organismsDiffer>
    <experiments>3</experiments>
</comment>
<comment type="interaction">
    <interactant intactId="EBI-25523464">
        <id>Q9FK47</id>
    </interactant>
    <interactant intactId="EBI-541115">
        <id>Q9FNZ4</id>
        <label>NIMIN-3</label>
    </interactant>
    <organismsDiffer>false</organismsDiffer>
    <experiments>3</experiments>
</comment>
<comment type="subcellular location">
    <subcellularLocation>
        <location evidence="5">Nucleus</location>
    </subcellularLocation>
</comment>
<comment type="alternative products">
    <event type="alternative splicing"/>
    <isoform>
        <id>Q9FK47-1</id>
        <name>1</name>
        <sequence type="displayed"/>
    </isoform>
    <isoform>
        <id>Q9FK47-2</id>
        <name>2</name>
        <sequence type="described" ref="VSP_058439"/>
    </isoform>
    <isoform>
        <id>Q9FK47-3</id>
        <name>3</name>
        <sequence type="described" ref="VSP_058438"/>
    </isoform>
</comment>
<comment type="tissue specificity">
    <text evidence="4">Expressed in phloem and/or cambium.</text>
</comment>
<comment type="disruption phenotype">
    <text evidence="5">No visible phenotype when grown under long days conditions, but early flowering when grown under short days conditions.</text>
</comment>
<comment type="similarity">
    <text evidence="8">Belongs to the MYB-CC family.</text>
</comment>
<organism>
    <name type="scientific">Arabidopsis thaliana</name>
    <name type="common">Mouse-ear cress</name>
    <dbReference type="NCBI Taxonomy" id="3702"/>
    <lineage>
        <taxon>Eukaryota</taxon>
        <taxon>Viridiplantae</taxon>
        <taxon>Streptophyta</taxon>
        <taxon>Embryophyta</taxon>
        <taxon>Tracheophyta</taxon>
        <taxon>Spermatophyta</taxon>
        <taxon>Magnoliopsida</taxon>
        <taxon>eudicotyledons</taxon>
        <taxon>Gunneridae</taxon>
        <taxon>Pentapetalae</taxon>
        <taxon>rosids</taxon>
        <taxon>malvids</taxon>
        <taxon>Brassicales</taxon>
        <taxon>Brassicaceae</taxon>
        <taxon>Camelineae</taxon>
        <taxon>Arabidopsis</taxon>
    </lineage>
</organism>
<dbReference type="EMBL" id="AF291817">
    <property type="protein sequence ID" value="AAK01148.1"/>
    <property type="molecule type" value="mRNA"/>
</dbReference>
<dbReference type="EMBL" id="AB012246">
    <property type="protein sequence ID" value="BAB09482.1"/>
    <property type="molecule type" value="Genomic_DNA"/>
</dbReference>
<dbReference type="EMBL" id="CP002688">
    <property type="protein sequence ID" value="AED92523.1"/>
    <property type="molecule type" value="Genomic_DNA"/>
</dbReference>
<dbReference type="EMBL" id="CP002688">
    <property type="protein sequence ID" value="AED92524.1"/>
    <property type="molecule type" value="Genomic_DNA"/>
</dbReference>
<dbReference type="EMBL" id="CP002688">
    <property type="protein sequence ID" value="AED92525.1"/>
    <property type="molecule type" value="Genomic_DNA"/>
</dbReference>
<dbReference type="EMBL" id="CP002688">
    <property type="protein sequence ID" value="AED92526.1"/>
    <property type="molecule type" value="Genomic_DNA"/>
</dbReference>
<dbReference type="EMBL" id="CP002688">
    <property type="protein sequence ID" value="AED92527.1"/>
    <property type="molecule type" value="Genomic_DNA"/>
</dbReference>
<dbReference type="EMBL" id="BT003421">
    <property type="protein sequence ID" value="AAO30084.1"/>
    <property type="molecule type" value="mRNA"/>
</dbReference>
<dbReference type="EMBL" id="AY042878">
    <property type="protein sequence ID" value="AAK68818.1"/>
    <property type="molecule type" value="mRNA"/>
</dbReference>
<dbReference type="RefSeq" id="NP_197325.1">
    <molecule id="Q9FK47-1"/>
    <property type="nucleotide sequence ID" value="NM_121829.2"/>
</dbReference>
<dbReference type="RefSeq" id="NP_850842.1">
    <molecule id="Q9FK47-3"/>
    <property type="nucleotide sequence ID" value="NM_180511.1"/>
</dbReference>
<dbReference type="RefSeq" id="NP_974797.1">
    <molecule id="Q9FK47-3"/>
    <property type="nucleotide sequence ID" value="NM_203068.2"/>
</dbReference>
<dbReference type="RefSeq" id="NP_974798.1">
    <molecule id="Q9FK47-1"/>
    <property type="nucleotide sequence ID" value="NM_203069.2"/>
</dbReference>
<dbReference type="RefSeq" id="NP_974799.1">
    <molecule id="Q9FK47-2"/>
    <property type="nucleotide sequence ID" value="NM_203070.2"/>
</dbReference>
<dbReference type="SMR" id="Q9FK47"/>
<dbReference type="FunCoup" id="Q9FK47">
    <property type="interactions" value="303"/>
</dbReference>
<dbReference type="IntAct" id="Q9FK47">
    <property type="interactions" value="4"/>
</dbReference>
<dbReference type="STRING" id="3702.Q9FK47"/>
<dbReference type="PaxDb" id="3702-AT5G18240.1"/>
<dbReference type="ProteomicsDB" id="235058">
    <molecule id="Q9FK47-1"/>
</dbReference>
<dbReference type="EnsemblPlants" id="AT5G18240.1">
    <molecule id="Q9FK47-1"/>
    <property type="protein sequence ID" value="AT5G18240.1"/>
    <property type="gene ID" value="AT5G18240"/>
</dbReference>
<dbReference type="EnsemblPlants" id="AT5G18240.2">
    <molecule id="Q9FK47-3"/>
    <property type="protein sequence ID" value="AT5G18240.2"/>
    <property type="gene ID" value="AT5G18240"/>
</dbReference>
<dbReference type="EnsemblPlants" id="AT5G18240.3">
    <molecule id="Q9FK47-3"/>
    <property type="protein sequence ID" value="AT5G18240.3"/>
    <property type="gene ID" value="AT5G18240"/>
</dbReference>
<dbReference type="EnsemblPlants" id="AT5G18240.4">
    <molecule id="Q9FK47-1"/>
    <property type="protein sequence ID" value="AT5G18240.4"/>
    <property type="gene ID" value="AT5G18240"/>
</dbReference>
<dbReference type="EnsemblPlants" id="AT5G18240.5">
    <molecule id="Q9FK47-2"/>
    <property type="protein sequence ID" value="AT5G18240.5"/>
    <property type="gene ID" value="AT5G18240"/>
</dbReference>
<dbReference type="GeneID" id="831942"/>
<dbReference type="Gramene" id="AT5G18240.1">
    <molecule id="Q9FK47-1"/>
    <property type="protein sequence ID" value="AT5G18240.1"/>
    <property type="gene ID" value="AT5G18240"/>
</dbReference>
<dbReference type="Gramene" id="AT5G18240.2">
    <molecule id="Q9FK47-3"/>
    <property type="protein sequence ID" value="AT5G18240.2"/>
    <property type="gene ID" value="AT5G18240"/>
</dbReference>
<dbReference type="Gramene" id="AT5G18240.3">
    <molecule id="Q9FK47-3"/>
    <property type="protein sequence ID" value="AT5G18240.3"/>
    <property type="gene ID" value="AT5G18240"/>
</dbReference>
<dbReference type="Gramene" id="AT5G18240.4">
    <molecule id="Q9FK47-1"/>
    <property type="protein sequence ID" value="AT5G18240.4"/>
    <property type="gene ID" value="AT5G18240"/>
</dbReference>
<dbReference type="Gramene" id="AT5G18240.5">
    <molecule id="Q9FK47-2"/>
    <property type="protein sequence ID" value="AT5G18240.5"/>
    <property type="gene ID" value="AT5G18240"/>
</dbReference>
<dbReference type="KEGG" id="ath:AT5G18240"/>
<dbReference type="Araport" id="AT5G18240"/>
<dbReference type="TAIR" id="AT5G18240">
    <property type="gene designation" value="MYR1"/>
</dbReference>
<dbReference type="eggNOG" id="ENOG502QT7M">
    <property type="taxonomic scope" value="Eukaryota"/>
</dbReference>
<dbReference type="HOGENOM" id="CLU_053944_3_0_1"/>
<dbReference type="InParanoid" id="Q9FK47"/>
<dbReference type="OMA" id="NTHEETY"/>
<dbReference type="OrthoDB" id="551907at2759"/>
<dbReference type="PhylomeDB" id="Q9FK47"/>
<dbReference type="PRO" id="PR:Q9FK47"/>
<dbReference type="Proteomes" id="UP000006548">
    <property type="component" value="Chromosome 5"/>
</dbReference>
<dbReference type="ExpressionAtlas" id="Q9FK47">
    <property type="expression patterns" value="baseline and differential"/>
</dbReference>
<dbReference type="GO" id="GO:0005634">
    <property type="term" value="C:nucleus"/>
    <property type="evidence" value="ECO:0007669"/>
    <property type="project" value="UniProtKB-SubCell"/>
</dbReference>
<dbReference type="GO" id="GO:0003677">
    <property type="term" value="F:DNA binding"/>
    <property type="evidence" value="ECO:0007669"/>
    <property type="project" value="UniProtKB-KW"/>
</dbReference>
<dbReference type="GO" id="GO:0003700">
    <property type="term" value="F:DNA-binding transcription factor activity"/>
    <property type="evidence" value="ECO:0000250"/>
    <property type="project" value="TAIR"/>
</dbReference>
<dbReference type="FunFam" id="1.10.10.60:FF:000002">
    <property type="entry name" value="Myb family transcription factor"/>
    <property type="match status" value="1"/>
</dbReference>
<dbReference type="Gene3D" id="1.10.10.60">
    <property type="entry name" value="Homeodomain-like"/>
    <property type="match status" value="1"/>
</dbReference>
<dbReference type="InterPro" id="IPR009057">
    <property type="entry name" value="Homeodomain-like_sf"/>
</dbReference>
<dbReference type="InterPro" id="IPR025756">
    <property type="entry name" value="Myb_CC_LHEQLE"/>
</dbReference>
<dbReference type="InterPro" id="IPR017930">
    <property type="entry name" value="Myb_dom"/>
</dbReference>
<dbReference type="InterPro" id="IPR006447">
    <property type="entry name" value="Myb_dom_plants"/>
</dbReference>
<dbReference type="InterPro" id="IPR046955">
    <property type="entry name" value="PHR1-like"/>
</dbReference>
<dbReference type="InterPro" id="IPR001005">
    <property type="entry name" value="SANT/Myb"/>
</dbReference>
<dbReference type="NCBIfam" id="TIGR01557">
    <property type="entry name" value="myb_SHAQKYF"/>
    <property type="match status" value="1"/>
</dbReference>
<dbReference type="PANTHER" id="PTHR31499">
    <property type="entry name" value="MYB FAMILY TRANSCRIPTION FACTOR PHL11"/>
    <property type="match status" value="1"/>
</dbReference>
<dbReference type="PANTHER" id="PTHR31499:SF46">
    <property type="entry name" value="MYB-RELATED PROTEIN 1"/>
    <property type="match status" value="1"/>
</dbReference>
<dbReference type="Pfam" id="PF14379">
    <property type="entry name" value="Myb_CC_LHEQLE"/>
    <property type="match status" value="1"/>
</dbReference>
<dbReference type="Pfam" id="PF00249">
    <property type="entry name" value="Myb_DNA-binding"/>
    <property type="match status" value="1"/>
</dbReference>
<dbReference type="SUPFAM" id="SSF46689">
    <property type="entry name" value="Homeodomain-like"/>
    <property type="match status" value="1"/>
</dbReference>
<dbReference type="PROSITE" id="PS51294">
    <property type="entry name" value="HTH_MYB"/>
    <property type="match status" value="1"/>
</dbReference>
<keyword id="KW-0025">Alternative splicing</keyword>
<keyword id="KW-0175">Coiled coil</keyword>
<keyword id="KW-0238">DNA-binding</keyword>
<keyword id="KW-0539">Nucleus</keyword>
<keyword id="KW-1185">Reference proteome</keyword>
<keyword id="KW-0804">Transcription</keyword>
<keyword id="KW-0805">Transcription regulation</keyword>
<reference key="1">
    <citation type="journal article" date="2002" name="Plant Mol. Biol.">
        <title>Cloning by pathway activation in yeast: identification of an Arabidopsis thaliana F-box protein that can turn on glucose repression.</title>
        <authorList>
            <person name="Thelander M."/>
            <person name="Fredriksson D."/>
            <person name="Schouten J."/>
            <person name="Hoge J.H.C."/>
            <person name="Ronne H."/>
        </authorList>
    </citation>
    <scope>NUCLEOTIDE SEQUENCE [MRNA] (ISOFORM 3)</scope>
</reference>
<reference key="2">
    <citation type="journal article" date="1998" name="DNA Res.">
        <title>Structural analysis of Arabidopsis thaliana chromosome 5. VI. Sequence features of the regions of 1,367,185 bp covered by 19 physically assigned P1 and TAC clones.</title>
        <authorList>
            <person name="Kotani H."/>
            <person name="Nakamura Y."/>
            <person name="Sato S."/>
            <person name="Asamizu E."/>
            <person name="Kaneko T."/>
            <person name="Miyajima N."/>
            <person name="Tabata S."/>
        </authorList>
    </citation>
    <scope>NUCLEOTIDE SEQUENCE [LARGE SCALE GENOMIC DNA]</scope>
    <source>
        <strain>cv. Columbia</strain>
    </source>
</reference>
<reference key="3">
    <citation type="journal article" date="2017" name="Plant J.">
        <title>Araport11: a complete reannotation of the Arabidopsis thaliana reference genome.</title>
        <authorList>
            <person name="Cheng C.Y."/>
            <person name="Krishnakumar V."/>
            <person name="Chan A.P."/>
            <person name="Thibaud-Nissen F."/>
            <person name="Schobel S."/>
            <person name="Town C.D."/>
        </authorList>
    </citation>
    <scope>GENOME REANNOTATION</scope>
    <source>
        <strain>cv. Columbia</strain>
    </source>
</reference>
<reference key="4">
    <citation type="journal article" date="2003" name="Science">
        <title>Empirical analysis of transcriptional activity in the Arabidopsis genome.</title>
        <authorList>
            <person name="Yamada K."/>
            <person name="Lim J."/>
            <person name="Dale J.M."/>
            <person name="Chen H."/>
            <person name="Shinn P."/>
            <person name="Palm C.J."/>
            <person name="Southwick A.M."/>
            <person name="Wu H.C."/>
            <person name="Kim C.J."/>
            <person name="Nguyen M."/>
            <person name="Pham P.K."/>
            <person name="Cheuk R.F."/>
            <person name="Karlin-Newmann G."/>
            <person name="Liu S.X."/>
            <person name="Lam B."/>
            <person name="Sakano H."/>
            <person name="Wu T."/>
            <person name="Yu G."/>
            <person name="Miranda M."/>
            <person name="Quach H.L."/>
            <person name="Tripp M."/>
            <person name="Chang C.H."/>
            <person name="Lee J.M."/>
            <person name="Toriumi M.J."/>
            <person name="Chan M.M."/>
            <person name="Tang C.C."/>
            <person name="Onodera C.S."/>
            <person name="Deng J.M."/>
            <person name="Akiyama K."/>
            <person name="Ansari Y."/>
            <person name="Arakawa T."/>
            <person name="Banh J."/>
            <person name="Banno F."/>
            <person name="Bowser L."/>
            <person name="Brooks S.Y."/>
            <person name="Carninci P."/>
            <person name="Chao Q."/>
            <person name="Choy N."/>
            <person name="Enju A."/>
            <person name="Goldsmith A.D."/>
            <person name="Gurjal M."/>
            <person name="Hansen N.F."/>
            <person name="Hayashizaki Y."/>
            <person name="Johnson-Hopson C."/>
            <person name="Hsuan V.W."/>
            <person name="Iida K."/>
            <person name="Karnes M."/>
            <person name="Khan S."/>
            <person name="Koesema E."/>
            <person name="Ishida J."/>
            <person name="Jiang P.X."/>
            <person name="Jones T."/>
            <person name="Kawai J."/>
            <person name="Kamiya A."/>
            <person name="Meyers C."/>
            <person name="Nakajima M."/>
            <person name="Narusaka M."/>
            <person name="Seki M."/>
            <person name="Sakurai T."/>
            <person name="Satou M."/>
            <person name="Tamse R."/>
            <person name="Vaysberg M."/>
            <person name="Wallender E.K."/>
            <person name="Wong C."/>
            <person name="Yamamura Y."/>
            <person name="Yuan S."/>
            <person name="Shinozaki K."/>
            <person name="Davis R.W."/>
            <person name="Theologis A."/>
            <person name="Ecker J.R."/>
        </authorList>
    </citation>
    <scope>NUCLEOTIDE SEQUENCE [LARGE SCALE MRNA] (ISOFORM 1)</scope>
    <source>
        <strain>cv. Columbia</strain>
    </source>
</reference>
<reference key="5">
    <citation type="journal article" date="2001" name="Genes Dev.">
        <title>A conserved MYB transcription factor involved in phosphate starvation signaling both in vascular plants and in unicellular algae.</title>
        <authorList>
            <person name="Rubio V."/>
            <person name="Linhares F."/>
            <person name="Solano R."/>
            <person name="Martin A.C."/>
            <person name="Iglesias J."/>
            <person name="Leyva A."/>
            <person name="Paz-Ares J."/>
        </authorList>
    </citation>
    <scope>GENE FAMILY</scope>
</reference>
<reference key="6">
    <citation type="journal article" date="2005" name="Plant Physiol.">
        <title>The xylem and phloem transcriptomes from secondary tissues of the Arabidopsis root-hypocotyl.</title>
        <authorList>
            <person name="Zhao C."/>
            <person name="Craig J.C."/>
            <person name="Petzold H.E."/>
            <person name="Dickerman A.W."/>
            <person name="Beers E.P."/>
        </authorList>
    </citation>
    <scope>TISSUE SPECIFICITY</scope>
</reference>
<reference key="7">
    <citation type="journal article" date="2011" name="Plant J.">
        <title>The Arabidopsis Myb genes MYR1 and MYR2 are redundant negative regulators of flowering time under decreased light intensity.</title>
        <authorList>
            <person name="Zhao C."/>
            <person name="Hanada A."/>
            <person name="Yamaguchi S."/>
            <person name="Kamiya Y."/>
            <person name="Beers E.P."/>
        </authorList>
    </citation>
    <scope>FUNCTION</scope>
    <scope>DISRUPTION PHENOTYPE</scope>
    <scope>SUBCELLULAR LOCATION</scope>
</reference>
<reference key="8">
    <citation type="journal article" date="2013" name="Plant Signal. Behav.">
        <title>Alternative splicing of Myb-related genes MYR1 and MYR2 may modulate activities through changes in dimerization, localization, or protein folding.</title>
        <authorList>
            <person name="Zhao C."/>
            <person name="Beers E."/>
        </authorList>
    </citation>
    <scope>ALTERNATIVE SPLICING</scope>
    <scope>SUBUNIT</scope>
</reference>
<sequence length="402" mass="45574">MYYHNQHQGKSILSSSRMPISSERHPFLRGNGTGDSGLILSTDAKPRLKWTPDLHERFVEAVNQLGGGDKATPKTIMKVMGIPGLTLYHLKSHLQKYRLSKNLNGQANSSLNKTSVMTMVEENPPEVDESHSESLSIGPQPSMNLPISDALQMQIEVQRRLHEQLEVQRHLQLRIEAQGKYLQSILEKAQETLGRQNLGAAGIEATKAQLSELVSKVSADYPDSSFLEPKELQNLHHQQMQKTYPPNSSLDSCLTSSEGTQKAPKMLDNRLGLRTYIGDSTSEQKEIMEEPFFHRMELTWAEEESLRENHNRPYLSTMVNNAEPRISSSRRSPGRLSIGVGLHEHRGRSSNNSEYTEERFNENNEDCKLETHTRTALDLNTHDENYGTTRPKQFDLNGFSWN</sequence>
<name>PHLA_ARATH</name>